<feature type="chain" id="PRO_0000390206" description="NADH-quinone oxidoreductase subunit K">
    <location>
        <begin position="1"/>
        <end position="102"/>
    </location>
</feature>
<feature type="transmembrane region" description="Helical" evidence="1">
    <location>
        <begin position="5"/>
        <end position="25"/>
    </location>
</feature>
<feature type="transmembrane region" description="Helical" evidence="1">
    <location>
        <begin position="31"/>
        <end position="51"/>
    </location>
</feature>
<feature type="transmembrane region" description="Helical" evidence="1">
    <location>
        <begin position="62"/>
        <end position="82"/>
    </location>
</feature>
<accession>Q21YB7</accession>
<keyword id="KW-0997">Cell inner membrane</keyword>
<keyword id="KW-1003">Cell membrane</keyword>
<keyword id="KW-0472">Membrane</keyword>
<keyword id="KW-0520">NAD</keyword>
<keyword id="KW-0874">Quinone</keyword>
<keyword id="KW-1185">Reference proteome</keyword>
<keyword id="KW-1278">Translocase</keyword>
<keyword id="KW-0812">Transmembrane</keyword>
<keyword id="KW-1133">Transmembrane helix</keyword>
<keyword id="KW-0813">Transport</keyword>
<keyword id="KW-0830">Ubiquinone</keyword>
<evidence type="ECO:0000255" key="1">
    <source>
        <dbReference type="HAMAP-Rule" id="MF_01456"/>
    </source>
</evidence>
<comment type="function">
    <text evidence="1">NDH-1 shuttles electrons from NADH, via FMN and iron-sulfur (Fe-S) centers, to quinones in the respiratory chain. The immediate electron acceptor for the enzyme in this species is believed to be ubiquinone. Couples the redox reaction to proton translocation (for every two electrons transferred, four hydrogen ions are translocated across the cytoplasmic membrane), and thus conserves the redox energy in a proton gradient.</text>
</comment>
<comment type="catalytic activity">
    <reaction evidence="1">
        <text>a quinone + NADH + 5 H(+)(in) = a quinol + NAD(+) + 4 H(+)(out)</text>
        <dbReference type="Rhea" id="RHEA:57888"/>
        <dbReference type="ChEBI" id="CHEBI:15378"/>
        <dbReference type="ChEBI" id="CHEBI:24646"/>
        <dbReference type="ChEBI" id="CHEBI:57540"/>
        <dbReference type="ChEBI" id="CHEBI:57945"/>
        <dbReference type="ChEBI" id="CHEBI:132124"/>
    </reaction>
</comment>
<comment type="subunit">
    <text evidence="1">NDH-1 is composed of 14 different subunits. Subunits NuoA, H, J, K, L, M, N constitute the membrane sector of the complex.</text>
</comment>
<comment type="subcellular location">
    <subcellularLocation>
        <location evidence="1">Cell inner membrane</location>
        <topology evidence="1">Multi-pass membrane protein</topology>
    </subcellularLocation>
</comment>
<comment type="similarity">
    <text evidence="1">Belongs to the complex I subunit 4L family.</text>
</comment>
<reference key="1">
    <citation type="submission" date="2006-02" db="EMBL/GenBank/DDBJ databases">
        <title>Complete sequence of chromosome of Rhodoferax ferrireducens DSM 15236.</title>
        <authorList>
            <person name="Copeland A."/>
            <person name="Lucas S."/>
            <person name="Lapidus A."/>
            <person name="Barry K."/>
            <person name="Detter J.C."/>
            <person name="Glavina del Rio T."/>
            <person name="Hammon N."/>
            <person name="Israni S."/>
            <person name="Pitluck S."/>
            <person name="Brettin T."/>
            <person name="Bruce D."/>
            <person name="Han C."/>
            <person name="Tapia R."/>
            <person name="Gilna P."/>
            <person name="Kiss H."/>
            <person name="Schmutz J."/>
            <person name="Larimer F."/>
            <person name="Land M."/>
            <person name="Kyrpides N."/>
            <person name="Ivanova N."/>
            <person name="Richardson P."/>
        </authorList>
    </citation>
    <scope>NUCLEOTIDE SEQUENCE [LARGE SCALE GENOMIC DNA]</scope>
    <source>
        <strain>ATCC BAA-621 / DSM 15236 / T118</strain>
    </source>
</reference>
<organism>
    <name type="scientific">Albidiferax ferrireducens (strain ATCC BAA-621 / DSM 15236 / T118)</name>
    <name type="common">Rhodoferax ferrireducens</name>
    <dbReference type="NCBI Taxonomy" id="338969"/>
    <lineage>
        <taxon>Bacteria</taxon>
        <taxon>Pseudomonadati</taxon>
        <taxon>Pseudomonadota</taxon>
        <taxon>Betaproteobacteria</taxon>
        <taxon>Burkholderiales</taxon>
        <taxon>Comamonadaceae</taxon>
        <taxon>Rhodoferax</taxon>
    </lineage>
</organism>
<sequence>MTLTLGHFLSLGAMLFALSVIGIFLNRKNLIVLLMAIELMLLAVNTNFVAFSYYLGDMHGQIFVFFILTVAAAESAIGLAILVLLFRNKSSINVDELNTLKG</sequence>
<gene>
    <name evidence="1" type="primary">nuoK</name>
    <name type="ordered locus">Rfer_1503</name>
</gene>
<name>NUOK_ALBFT</name>
<proteinExistence type="inferred from homology"/>
<dbReference type="EC" id="7.1.1.-" evidence="1"/>
<dbReference type="EMBL" id="CP000267">
    <property type="protein sequence ID" value="ABD69236.1"/>
    <property type="molecule type" value="Genomic_DNA"/>
</dbReference>
<dbReference type="RefSeq" id="WP_011463804.1">
    <property type="nucleotide sequence ID" value="NC_007908.1"/>
</dbReference>
<dbReference type="SMR" id="Q21YB7"/>
<dbReference type="STRING" id="338969.Rfer_1503"/>
<dbReference type="KEGG" id="rfr:Rfer_1503"/>
<dbReference type="eggNOG" id="COG0713">
    <property type="taxonomic scope" value="Bacteria"/>
</dbReference>
<dbReference type="HOGENOM" id="CLU_144724_2_0_4"/>
<dbReference type="OrthoDB" id="9801357at2"/>
<dbReference type="Proteomes" id="UP000008332">
    <property type="component" value="Chromosome"/>
</dbReference>
<dbReference type="GO" id="GO:0030964">
    <property type="term" value="C:NADH dehydrogenase complex"/>
    <property type="evidence" value="ECO:0007669"/>
    <property type="project" value="TreeGrafter"/>
</dbReference>
<dbReference type="GO" id="GO:0005886">
    <property type="term" value="C:plasma membrane"/>
    <property type="evidence" value="ECO:0007669"/>
    <property type="project" value="UniProtKB-SubCell"/>
</dbReference>
<dbReference type="GO" id="GO:0050136">
    <property type="term" value="F:NADH:ubiquinone reductase (non-electrogenic) activity"/>
    <property type="evidence" value="ECO:0007669"/>
    <property type="project" value="UniProtKB-UniRule"/>
</dbReference>
<dbReference type="GO" id="GO:0048038">
    <property type="term" value="F:quinone binding"/>
    <property type="evidence" value="ECO:0007669"/>
    <property type="project" value="UniProtKB-KW"/>
</dbReference>
<dbReference type="GO" id="GO:0042773">
    <property type="term" value="P:ATP synthesis coupled electron transport"/>
    <property type="evidence" value="ECO:0007669"/>
    <property type="project" value="InterPro"/>
</dbReference>
<dbReference type="FunFam" id="1.10.287.3510:FF:000001">
    <property type="entry name" value="NADH-quinone oxidoreductase subunit K"/>
    <property type="match status" value="1"/>
</dbReference>
<dbReference type="Gene3D" id="1.10.287.3510">
    <property type="match status" value="1"/>
</dbReference>
<dbReference type="HAMAP" id="MF_01456">
    <property type="entry name" value="NDH1_NuoK"/>
    <property type="match status" value="1"/>
</dbReference>
<dbReference type="InterPro" id="IPR001133">
    <property type="entry name" value="NADH_UbQ_OxRdtase_chain4L/K"/>
</dbReference>
<dbReference type="InterPro" id="IPR039428">
    <property type="entry name" value="NUOK/Mnh_C1-like"/>
</dbReference>
<dbReference type="NCBIfam" id="NF004320">
    <property type="entry name" value="PRK05715.1-2"/>
    <property type="match status" value="1"/>
</dbReference>
<dbReference type="NCBIfam" id="NF004321">
    <property type="entry name" value="PRK05715.1-3"/>
    <property type="match status" value="1"/>
</dbReference>
<dbReference type="NCBIfam" id="NF004323">
    <property type="entry name" value="PRK05715.1-5"/>
    <property type="match status" value="1"/>
</dbReference>
<dbReference type="PANTHER" id="PTHR11434:SF21">
    <property type="entry name" value="NADH DEHYDROGENASE SUBUNIT 4L-RELATED"/>
    <property type="match status" value="1"/>
</dbReference>
<dbReference type="PANTHER" id="PTHR11434">
    <property type="entry name" value="NADH-UBIQUINONE OXIDOREDUCTASE SUBUNIT ND4L"/>
    <property type="match status" value="1"/>
</dbReference>
<dbReference type="Pfam" id="PF00420">
    <property type="entry name" value="Oxidored_q2"/>
    <property type="match status" value="1"/>
</dbReference>
<protein>
    <recommendedName>
        <fullName evidence="1">NADH-quinone oxidoreductase subunit K</fullName>
        <ecNumber evidence="1">7.1.1.-</ecNumber>
    </recommendedName>
    <alternativeName>
        <fullName evidence="1">NADH dehydrogenase I subunit K</fullName>
    </alternativeName>
    <alternativeName>
        <fullName evidence="1">NDH-1 subunit K</fullName>
    </alternativeName>
</protein>